<gene>
    <name type="primary">rps18</name>
</gene>
<keyword id="KW-0150">Chloroplast</keyword>
<keyword id="KW-0934">Plastid</keyword>
<keyword id="KW-0687">Ribonucleoprotein</keyword>
<keyword id="KW-0689">Ribosomal protein</keyword>
<keyword id="KW-0694">RNA-binding</keyword>
<keyword id="KW-0699">rRNA-binding</keyword>
<accession>Q9MUP6</accession>
<organism>
    <name type="scientific">Mesostigma viride</name>
    <name type="common">Green alga</name>
    <dbReference type="NCBI Taxonomy" id="41882"/>
    <lineage>
        <taxon>Eukaryota</taxon>
        <taxon>Viridiplantae</taxon>
        <taxon>Streptophyta</taxon>
        <taxon>Mesostigmatophyceae</taxon>
        <taxon>Mesostigmatales</taxon>
        <taxon>Mesostigmataceae</taxon>
        <taxon>Mesostigma</taxon>
    </lineage>
</organism>
<feature type="chain" id="PRO_0000111294" description="Small ribosomal subunit protein bS18c">
    <location>
        <begin position="1"/>
        <end position="71"/>
    </location>
</feature>
<geneLocation type="chloroplast"/>
<reference key="1">
    <citation type="journal article" date="2000" name="Nature">
        <title>Ancestral chloroplast genome in Mesostigma viride reveals an early branch of green plant evolution.</title>
        <authorList>
            <person name="Lemieux C."/>
            <person name="Otis C."/>
            <person name="Turmel M."/>
        </authorList>
    </citation>
    <scope>NUCLEOTIDE SEQUENCE [LARGE SCALE GENOMIC DNA]</scope>
    <source>
        <strain>NIES-296 / KY-14 / CCMP 2046</strain>
    </source>
</reference>
<name>RR18_MESVI</name>
<evidence type="ECO:0000305" key="1"/>
<comment type="subunit">
    <text>Part of the 30S ribosomal subunit.</text>
</comment>
<comment type="subcellular location">
    <subcellularLocation>
        <location>Plastid</location>
        <location>Chloroplast</location>
    </subcellularLocation>
</comment>
<comment type="similarity">
    <text evidence="1">Belongs to the bacterial ribosomal protein bS18 family.</text>
</comment>
<dbReference type="EMBL" id="AF166114">
    <property type="protein sequence ID" value="AAF43854.1"/>
    <property type="molecule type" value="Genomic_DNA"/>
</dbReference>
<dbReference type="RefSeq" id="NP_038414.1">
    <property type="nucleotide sequence ID" value="NC_002186.1"/>
</dbReference>
<dbReference type="SMR" id="Q9MUP6"/>
<dbReference type="GeneID" id="800922"/>
<dbReference type="GO" id="GO:0009507">
    <property type="term" value="C:chloroplast"/>
    <property type="evidence" value="ECO:0007669"/>
    <property type="project" value="UniProtKB-SubCell"/>
</dbReference>
<dbReference type="GO" id="GO:0005763">
    <property type="term" value="C:mitochondrial small ribosomal subunit"/>
    <property type="evidence" value="ECO:0007669"/>
    <property type="project" value="TreeGrafter"/>
</dbReference>
<dbReference type="GO" id="GO:0070181">
    <property type="term" value="F:small ribosomal subunit rRNA binding"/>
    <property type="evidence" value="ECO:0007669"/>
    <property type="project" value="TreeGrafter"/>
</dbReference>
<dbReference type="GO" id="GO:0003735">
    <property type="term" value="F:structural constituent of ribosome"/>
    <property type="evidence" value="ECO:0007669"/>
    <property type="project" value="InterPro"/>
</dbReference>
<dbReference type="GO" id="GO:0006412">
    <property type="term" value="P:translation"/>
    <property type="evidence" value="ECO:0007669"/>
    <property type="project" value="UniProtKB-UniRule"/>
</dbReference>
<dbReference type="FunFam" id="4.10.640.10:FF:000002">
    <property type="entry name" value="30S ribosomal protein S18, chloroplastic"/>
    <property type="match status" value="1"/>
</dbReference>
<dbReference type="Gene3D" id="4.10.640.10">
    <property type="entry name" value="Ribosomal protein S18"/>
    <property type="match status" value="1"/>
</dbReference>
<dbReference type="HAMAP" id="MF_00270">
    <property type="entry name" value="Ribosomal_bS18"/>
    <property type="match status" value="1"/>
</dbReference>
<dbReference type="InterPro" id="IPR001648">
    <property type="entry name" value="Ribosomal_bS18"/>
</dbReference>
<dbReference type="InterPro" id="IPR018275">
    <property type="entry name" value="Ribosomal_bS18_CS"/>
</dbReference>
<dbReference type="InterPro" id="IPR036870">
    <property type="entry name" value="Ribosomal_bS18_sf"/>
</dbReference>
<dbReference type="NCBIfam" id="TIGR00165">
    <property type="entry name" value="S18"/>
    <property type="match status" value="1"/>
</dbReference>
<dbReference type="PANTHER" id="PTHR13479">
    <property type="entry name" value="30S RIBOSOMAL PROTEIN S18"/>
    <property type="match status" value="1"/>
</dbReference>
<dbReference type="PANTHER" id="PTHR13479:SF40">
    <property type="entry name" value="SMALL RIBOSOMAL SUBUNIT PROTEIN BS18M"/>
    <property type="match status" value="1"/>
</dbReference>
<dbReference type="Pfam" id="PF01084">
    <property type="entry name" value="Ribosomal_S18"/>
    <property type="match status" value="1"/>
</dbReference>
<dbReference type="PRINTS" id="PR00974">
    <property type="entry name" value="RIBOSOMALS18"/>
</dbReference>
<dbReference type="SUPFAM" id="SSF46911">
    <property type="entry name" value="Ribosomal protein S18"/>
    <property type="match status" value="1"/>
</dbReference>
<dbReference type="PROSITE" id="PS00057">
    <property type="entry name" value="RIBOSOMAL_S18"/>
    <property type="match status" value="1"/>
</dbReference>
<proteinExistence type="inferred from homology"/>
<sequence length="71" mass="8274">MTFSRRRTSPIKPTDSIDYKNIDLLSQFITEQGKILPRRVNNISAKQQRAITKAIKQARFLTLLPFLNQEI</sequence>
<protein>
    <recommendedName>
        <fullName evidence="1">Small ribosomal subunit protein bS18c</fullName>
    </recommendedName>
    <alternativeName>
        <fullName>30S ribosomal protein S18, chloroplastic</fullName>
    </alternativeName>
</protein>